<proteinExistence type="evidence at protein level"/>
<accession>Q60351</accession>
<reference key="1">
    <citation type="journal article" date="1996" name="Science">
        <title>Complete genome sequence of the methanogenic archaeon, Methanococcus jannaschii.</title>
        <authorList>
            <person name="Bult C.J."/>
            <person name="White O."/>
            <person name="Olsen G.J."/>
            <person name="Zhou L."/>
            <person name="Fleischmann R.D."/>
            <person name="Sutton G.G."/>
            <person name="Blake J.A."/>
            <person name="FitzGerald L.M."/>
            <person name="Clayton R.A."/>
            <person name="Gocayne J.D."/>
            <person name="Kerlavage A.R."/>
            <person name="Dougherty B.A."/>
            <person name="Tomb J.-F."/>
            <person name="Adams M.D."/>
            <person name="Reich C.I."/>
            <person name="Overbeek R."/>
            <person name="Kirkness E.F."/>
            <person name="Weinstock K.G."/>
            <person name="Merrick J.M."/>
            <person name="Glodek A."/>
            <person name="Scott J.L."/>
            <person name="Geoghagen N.S.M."/>
            <person name="Weidman J.F."/>
            <person name="Fuhrmann J.L."/>
            <person name="Nguyen D."/>
            <person name="Utterback T.R."/>
            <person name="Kelley J.M."/>
            <person name="Peterson J.D."/>
            <person name="Sadow P.W."/>
            <person name="Hanna M.C."/>
            <person name="Cotton M.D."/>
            <person name="Roberts K.M."/>
            <person name="Hurst M.A."/>
            <person name="Kaine B.P."/>
            <person name="Borodovsky M."/>
            <person name="Klenk H.-P."/>
            <person name="Fraser C.M."/>
            <person name="Smith H.O."/>
            <person name="Woese C.R."/>
            <person name="Venter J.C."/>
        </authorList>
    </citation>
    <scope>NUCLEOTIDE SEQUENCE [LARGE SCALE GENOMIC DNA]</scope>
    <source>
        <strain>ATCC 43067 / DSM 2661 / JAL-1 / JCM 10045 / NBRC 100440</strain>
    </source>
</reference>
<reference key="2">
    <citation type="journal article" date="2000" name="Nucleic Acids Res.">
        <title>Archaeal RNA polymerase subunits F and P are bona fide homologs of eukaryotic RPB4 and RPB12.</title>
        <authorList>
            <person name="Werner F."/>
            <person name="Eloranta J.J."/>
            <person name="Weinzierl R.O."/>
        </authorList>
    </citation>
    <scope>INTERACTION WITH RPO7</scope>
    <scope>SUBUNIT</scope>
</reference>
<reference evidence="6" key="3">
    <citation type="journal article" date="2001" name="Mol. Cell">
        <title>Structure of an archaeal homolog of the eukaryotic RNA polymerase II RPB4/RPB7 complex.</title>
        <authorList>
            <person name="Todone F."/>
            <person name="Brick P."/>
            <person name="Werner F."/>
            <person name="Weinzierl R.O."/>
            <person name="Onesti S."/>
        </authorList>
    </citation>
    <scope>X-RAY CRYSTALLOGRAPHY (1.75 ANGSTROMS) OF 9-115</scope>
    <scope>SUBUNIT</scope>
</reference>
<evidence type="ECO:0000255" key="1">
    <source>
        <dbReference type="HAMAP-Rule" id="MF_00864"/>
    </source>
</evidence>
<evidence type="ECO:0000269" key="2">
    <source>
    </source>
</evidence>
<evidence type="ECO:0000303" key="3">
    <source>
    </source>
</evidence>
<evidence type="ECO:0000305" key="4">
    <source>
    </source>
</evidence>
<evidence type="ECO:0000305" key="5">
    <source>
    </source>
</evidence>
<evidence type="ECO:0007744" key="6">
    <source>
        <dbReference type="PDB" id="1GO3"/>
    </source>
</evidence>
<evidence type="ECO:0007829" key="7">
    <source>
        <dbReference type="PDB" id="1GO3"/>
    </source>
</evidence>
<organism>
    <name type="scientific">Methanocaldococcus jannaschii (strain ATCC 43067 / DSM 2661 / JAL-1 / JCM 10045 / NBRC 100440)</name>
    <name type="common">Methanococcus jannaschii</name>
    <dbReference type="NCBI Taxonomy" id="243232"/>
    <lineage>
        <taxon>Archaea</taxon>
        <taxon>Methanobacteriati</taxon>
        <taxon>Methanobacteriota</taxon>
        <taxon>Methanomada group</taxon>
        <taxon>Methanococci</taxon>
        <taxon>Methanococcales</taxon>
        <taxon>Methanocaldococcaceae</taxon>
        <taxon>Methanocaldococcus</taxon>
    </lineage>
</organism>
<gene>
    <name evidence="1" type="primary">rpo4</name>
    <name evidence="1" type="synonym">rpoF</name>
    <name type="ordered locus">MJ0039</name>
</gene>
<comment type="function">
    <text evidence="1">DNA-dependent RNA polymerase (RNAP) catalyzes the transcription of DNA into RNA using the four ribonucleoside triphosphates as substrates. This subunit is less well bound than the others.</text>
</comment>
<comment type="catalytic activity">
    <reaction evidence="1">
        <text>RNA(n) + a ribonucleoside 5'-triphosphate = RNA(n+1) + diphosphate</text>
        <dbReference type="Rhea" id="RHEA:21248"/>
        <dbReference type="Rhea" id="RHEA-COMP:14527"/>
        <dbReference type="Rhea" id="RHEA-COMP:17342"/>
        <dbReference type="ChEBI" id="CHEBI:33019"/>
        <dbReference type="ChEBI" id="CHEBI:61557"/>
        <dbReference type="ChEBI" id="CHEBI:140395"/>
        <dbReference type="EC" id="2.7.7.6"/>
    </reaction>
</comment>
<comment type="subunit">
    <text evidence="1 2 4">Part of the RNA polymerase complex. Forms a stalk with Rpo7 that extends from the main structure.</text>
</comment>
<comment type="subcellular location">
    <subcellularLocation>
        <location evidence="1">Cytoplasm</location>
    </subcellularLocation>
</comment>
<comment type="similarity">
    <text evidence="1 5">Belongs to the eukaryotic RPB4 RNA polymerase subunit family.</text>
</comment>
<comment type="caution">
    <text evidence="5">It is uncertain whether Met-1 or Met-9 is the initiator.</text>
</comment>
<protein>
    <recommendedName>
        <fullName evidence="1">DNA-directed RNA polymerase subunit Rpo4</fullName>
        <ecNumber evidence="1">2.7.7.6</ecNumber>
    </recommendedName>
    <alternativeName>
        <fullName evidence="1 3">DNA-directed RNA polymerase subunit F</fullName>
        <shortName evidence="3">mjF</shortName>
    </alternativeName>
</protein>
<sequence>MYQAKRERMIGKKILGERYVTVSEAAEIMYNRAQIGELSYEQGCALDYLQKFAKLDKEEAKKLVEELISLGIDEKTAVKIADILPEDLDDLRAIYYKRELPENAEEILEIVRKYI</sequence>
<dbReference type="EC" id="2.7.7.6" evidence="1"/>
<dbReference type="EMBL" id="L77117">
    <property type="protein sequence ID" value="AAB98020.1"/>
    <property type="molecule type" value="Genomic_DNA"/>
</dbReference>
<dbReference type="PIR" id="G64304">
    <property type="entry name" value="G64304"/>
</dbReference>
<dbReference type="PDB" id="1GO3">
    <property type="method" value="X-ray"/>
    <property type="resolution" value="1.75 A"/>
    <property type="chains" value="F/N=9-115"/>
</dbReference>
<dbReference type="PDBsum" id="1GO3"/>
<dbReference type="SMR" id="Q60351"/>
<dbReference type="FunCoup" id="Q60351">
    <property type="interactions" value="6"/>
</dbReference>
<dbReference type="IntAct" id="Q60351">
    <property type="interactions" value="1"/>
</dbReference>
<dbReference type="STRING" id="243232.MJ_0039"/>
<dbReference type="PaxDb" id="243232-MJ_0039"/>
<dbReference type="EnsemblBacteria" id="AAB98020">
    <property type="protein sequence ID" value="AAB98020"/>
    <property type="gene ID" value="MJ_0039"/>
</dbReference>
<dbReference type="KEGG" id="mja:MJ_0039"/>
<dbReference type="eggNOG" id="arCOG01016">
    <property type="taxonomic scope" value="Archaea"/>
</dbReference>
<dbReference type="HOGENOM" id="CLU_165892_1_0_2"/>
<dbReference type="InParanoid" id="Q60351"/>
<dbReference type="PhylomeDB" id="Q60351"/>
<dbReference type="EvolutionaryTrace" id="Q60351"/>
<dbReference type="Proteomes" id="UP000000805">
    <property type="component" value="Chromosome"/>
</dbReference>
<dbReference type="GO" id="GO:0005737">
    <property type="term" value="C:cytoplasm"/>
    <property type="evidence" value="ECO:0007669"/>
    <property type="project" value="UniProtKB-SubCell"/>
</dbReference>
<dbReference type="GO" id="GO:0000428">
    <property type="term" value="C:DNA-directed RNA polymerase complex"/>
    <property type="evidence" value="ECO:0007669"/>
    <property type="project" value="UniProtKB-KW"/>
</dbReference>
<dbReference type="GO" id="GO:0003899">
    <property type="term" value="F:DNA-directed RNA polymerase activity"/>
    <property type="evidence" value="ECO:0007669"/>
    <property type="project" value="UniProtKB-UniRule"/>
</dbReference>
<dbReference type="GO" id="GO:0000166">
    <property type="term" value="F:nucleotide binding"/>
    <property type="evidence" value="ECO:0007669"/>
    <property type="project" value="InterPro"/>
</dbReference>
<dbReference type="GO" id="GO:0006352">
    <property type="term" value="P:DNA-templated transcription initiation"/>
    <property type="evidence" value="ECO:0007669"/>
    <property type="project" value="InterPro"/>
</dbReference>
<dbReference type="Gene3D" id="6.10.140.10">
    <property type="match status" value="1"/>
</dbReference>
<dbReference type="Gene3D" id="1.10.150.80">
    <property type="entry name" value="HRDC domain"/>
    <property type="match status" value="1"/>
</dbReference>
<dbReference type="HAMAP" id="MF_00864">
    <property type="entry name" value="RNApol_arch_Rpo4"/>
    <property type="match status" value="1"/>
</dbReference>
<dbReference type="InterPro" id="IPR010997">
    <property type="entry name" value="HRDC-like_sf"/>
</dbReference>
<dbReference type="InterPro" id="IPR044876">
    <property type="entry name" value="HRDC_dom_sf"/>
</dbReference>
<dbReference type="InterPro" id="IPR005574">
    <property type="entry name" value="Rpb4/RPC9"/>
</dbReference>
<dbReference type="InterPro" id="IPR010924">
    <property type="entry name" value="Rpo4"/>
</dbReference>
<dbReference type="NCBIfam" id="NF011554">
    <property type="entry name" value="PRK14981.1-6"/>
    <property type="match status" value="1"/>
</dbReference>
<dbReference type="PANTHER" id="PTHR39646:SF1">
    <property type="entry name" value="DNA-DIRECTED RNA POLYMERASE SUBUNIT RPO4"/>
    <property type="match status" value="1"/>
</dbReference>
<dbReference type="PANTHER" id="PTHR39646">
    <property type="entry name" value="RNA POLYMERASE RPB4"/>
    <property type="match status" value="1"/>
</dbReference>
<dbReference type="Pfam" id="PF03874">
    <property type="entry name" value="RNA_pol_Rpb4"/>
    <property type="match status" value="1"/>
</dbReference>
<dbReference type="PIRSF" id="PIRSF005053">
    <property type="entry name" value="RNA_pol_F_arch"/>
    <property type="match status" value="1"/>
</dbReference>
<dbReference type="SUPFAM" id="SSF47819">
    <property type="entry name" value="HRDC-like"/>
    <property type="match status" value="1"/>
</dbReference>
<feature type="chain" id="PRO_0000106663" description="DNA-directed RNA polymerase subunit Rpo4">
    <location>
        <begin position="1"/>
        <end position="115"/>
    </location>
</feature>
<feature type="strand" evidence="7">
    <location>
        <begin position="11"/>
        <end position="20"/>
    </location>
</feature>
<feature type="helix" evidence="7">
    <location>
        <begin position="22"/>
        <end position="35"/>
    </location>
</feature>
<feature type="helix" evidence="7">
    <location>
        <begin position="40"/>
        <end position="52"/>
    </location>
</feature>
<feature type="helix" evidence="7">
    <location>
        <begin position="57"/>
        <end position="69"/>
    </location>
</feature>
<feature type="helix" evidence="7">
    <location>
        <begin position="74"/>
        <end position="83"/>
    </location>
</feature>
<feature type="helix" evidence="7">
    <location>
        <begin position="88"/>
        <end position="94"/>
    </location>
</feature>
<feature type="helix" evidence="7">
    <location>
        <begin position="104"/>
        <end position="111"/>
    </location>
</feature>
<keyword id="KW-0002">3D-structure</keyword>
<keyword id="KW-0963">Cytoplasm</keyword>
<keyword id="KW-0240">DNA-directed RNA polymerase</keyword>
<keyword id="KW-0548">Nucleotidyltransferase</keyword>
<keyword id="KW-1185">Reference proteome</keyword>
<keyword id="KW-0804">Transcription</keyword>
<keyword id="KW-0808">Transferase</keyword>
<name>RPO4_METJA</name>